<evidence type="ECO:0000255" key="1">
    <source>
        <dbReference type="HAMAP-Rule" id="MF_01516"/>
    </source>
</evidence>
<feature type="chain" id="PRO_0000343166" description="Malate dehydrogenase">
    <location>
        <begin position="1"/>
        <end position="312"/>
    </location>
</feature>
<feature type="active site" description="Proton acceptor" evidence="1">
    <location>
        <position position="177"/>
    </location>
</feature>
<feature type="binding site" evidence="1">
    <location>
        <begin position="7"/>
        <end position="13"/>
    </location>
    <ligand>
        <name>NAD(+)</name>
        <dbReference type="ChEBI" id="CHEBI:57540"/>
    </ligand>
</feature>
<feature type="binding site" evidence="1">
    <location>
        <position position="34"/>
    </location>
    <ligand>
        <name>NAD(+)</name>
        <dbReference type="ChEBI" id="CHEBI:57540"/>
    </ligand>
</feature>
<feature type="binding site" evidence="1">
    <location>
        <position position="81"/>
    </location>
    <ligand>
        <name>substrate</name>
    </ligand>
</feature>
<feature type="binding site" evidence="1">
    <location>
        <position position="87"/>
    </location>
    <ligand>
        <name>substrate</name>
    </ligand>
</feature>
<feature type="binding site" evidence="1">
    <location>
        <position position="94"/>
    </location>
    <ligand>
        <name>NAD(+)</name>
        <dbReference type="ChEBI" id="CHEBI:57540"/>
    </ligand>
</feature>
<feature type="binding site" evidence="1">
    <location>
        <begin position="117"/>
        <end position="119"/>
    </location>
    <ligand>
        <name>NAD(+)</name>
        <dbReference type="ChEBI" id="CHEBI:57540"/>
    </ligand>
</feature>
<feature type="binding site" evidence="1">
    <location>
        <position position="119"/>
    </location>
    <ligand>
        <name>substrate</name>
    </ligand>
</feature>
<feature type="binding site" evidence="1">
    <location>
        <position position="153"/>
    </location>
    <ligand>
        <name>substrate</name>
    </ligand>
</feature>
<feature type="binding site" evidence="1">
    <location>
        <position position="227"/>
    </location>
    <ligand>
        <name>NAD(+)</name>
        <dbReference type="ChEBI" id="CHEBI:57540"/>
    </ligand>
</feature>
<sequence>MKVAVLGAAGGIGQALALLLKTQLPSGSDLSLYDIAPVTPGVAVDLSHIPTAVNIKGFSGEDATPALQGADIVLISAGVARKPGMDRSDLFNVNAGIVRNLVEQIARTCPNALIGIITNPVNTTVAIAAEVLKKAGVYDKNKLFGITTLDTIRSNTFVAELKGKQPQDIEVPVIGGHSGVTILPLLSQIPGVSFTEQEVADLTKRIQNAGTEVVEAKAGGGSATLSMGQAAARFGLSLVRALQGESNVVECSYVEGDGKYARFFAQPILLGKNGVAERKDIGKLSAFEQQALENMLDVLHKDIELGEKFVNQ</sequence>
<gene>
    <name evidence="1" type="primary">mdh</name>
    <name type="ordered locus">YPTS_0490</name>
</gene>
<name>MDH_YERPB</name>
<accession>B2K2N5</accession>
<accession>P61893</accession>
<accession>Q66F80</accession>
<accession>Q9ETQ6</accession>
<comment type="function">
    <text evidence="1">Catalyzes the reversible oxidation of malate to oxaloacetate.</text>
</comment>
<comment type="catalytic activity">
    <reaction evidence="1">
        <text>(S)-malate + NAD(+) = oxaloacetate + NADH + H(+)</text>
        <dbReference type="Rhea" id="RHEA:21432"/>
        <dbReference type="ChEBI" id="CHEBI:15378"/>
        <dbReference type="ChEBI" id="CHEBI:15589"/>
        <dbReference type="ChEBI" id="CHEBI:16452"/>
        <dbReference type="ChEBI" id="CHEBI:57540"/>
        <dbReference type="ChEBI" id="CHEBI:57945"/>
        <dbReference type="EC" id="1.1.1.37"/>
    </reaction>
</comment>
<comment type="subunit">
    <text evidence="1">Homodimer.</text>
</comment>
<comment type="similarity">
    <text evidence="1">Belongs to the LDH/MDH superfamily. MDH type 1 family.</text>
</comment>
<reference key="1">
    <citation type="submission" date="2000-06" db="EMBL/GenBank/DDBJ databases">
        <title>Molecular epidemiology of Yersinia pestis.</title>
        <authorList>
            <person name="Lindler L.E."/>
            <person name="Huang X."/>
            <person name="Chu M."/>
            <person name="Popek M."/>
        </authorList>
    </citation>
    <scope>NUCLEOTIDE SEQUENCE [GENOMIC DNA]</scope>
</reference>
<reference key="2">
    <citation type="submission" date="2008-04" db="EMBL/GenBank/DDBJ databases">
        <title>Complete sequence of Yersinia pseudotuberculosis PB1/+.</title>
        <authorList>
            <person name="Copeland A."/>
            <person name="Lucas S."/>
            <person name="Lapidus A."/>
            <person name="Glavina del Rio T."/>
            <person name="Dalin E."/>
            <person name="Tice H."/>
            <person name="Bruce D."/>
            <person name="Goodwin L."/>
            <person name="Pitluck S."/>
            <person name="Munk A.C."/>
            <person name="Brettin T."/>
            <person name="Detter J.C."/>
            <person name="Han C."/>
            <person name="Tapia R."/>
            <person name="Schmutz J."/>
            <person name="Larimer F."/>
            <person name="Land M."/>
            <person name="Hauser L."/>
            <person name="Challacombe J.F."/>
            <person name="Green L."/>
            <person name="Lindler L.E."/>
            <person name="Nikolich M.P."/>
            <person name="Richardson P."/>
        </authorList>
    </citation>
    <scope>NUCLEOTIDE SEQUENCE [LARGE SCALE GENOMIC DNA]</scope>
    <source>
        <strain>PB1/+</strain>
    </source>
</reference>
<keyword id="KW-0520">NAD</keyword>
<keyword id="KW-0560">Oxidoreductase</keyword>
<keyword id="KW-0816">Tricarboxylic acid cycle</keyword>
<protein>
    <recommendedName>
        <fullName evidence="1">Malate dehydrogenase</fullName>
        <ecNumber evidence="1">1.1.1.37</ecNumber>
    </recommendedName>
</protein>
<dbReference type="EC" id="1.1.1.37" evidence="1"/>
<dbReference type="EMBL" id="AF282310">
    <property type="protein sequence ID" value="AAG21999.1"/>
    <property type="molecule type" value="Genomic_DNA"/>
</dbReference>
<dbReference type="EMBL" id="CP001048">
    <property type="protein sequence ID" value="ACC87476.1"/>
    <property type="molecule type" value="Genomic_DNA"/>
</dbReference>
<dbReference type="RefSeq" id="WP_002210174.1">
    <property type="nucleotide sequence ID" value="NZ_CP009780.1"/>
</dbReference>
<dbReference type="SMR" id="B2K2N5"/>
<dbReference type="GeneID" id="57975198"/>
<dbReference type="KEGG" id="ypb:YPTS_0490"/>
<dbReference type="PATRIC" id="fig|502801.10.peg.4164"/>
<dbReference type="GO" id="GO:0005737">
    <property type="term" value="C:cytoplasm"/>
    <property type="evidence" value="ECO:0007669"/>
    <property type="project" value="TreeGrafter"/>
</dbReference>
<dbReference type="GO" id="GO:0030060">
    <property type="term" value="F:L-malate dehydrogenase (NAD+) activity"/>
    <property type="evidence" value="ECO:0007669"/>
    <property type="project" value="UniProtKB-UniRule"/>
</dbReference>
<dbReference type="GO" id="GO:0006108">
    <property type="term" value="P:malate metabolic process"/>
    <property type="evidence" value="ECO:0007669"/>
    <property type="project" value="InterPro"/>
</dbReference>
<dbReference type="GO" id="GO:0006099">
    <property type="term" value="P:tricarboxylic acid cycle"/>
    <property type="evidence" value="ECO:0007669"/>
    <property type="project" value="UniProtKB-UniRule"/>
</dbReference>
<dbReference type="CDD" id="cd01337">
    <property type="entry name" value="MDH_glyoxysomal_mitochondrial"/>
    <property type="match status" value="1"/>
</dbReference>
<dbReference type="FunFam" id="3.40.50.720:FF:000017">
    <property type="entry name" value="Malate dehydrogenase"/>
    <property type="match status" value="1"/>
</dbReference>
<dbReference type="FunFam" id="3.90.110.10:FF:000001">
    <property type="entry name" value="Malate dehydrogenase"/>
    <property type="match status" value="1"/>
</dbReference>
<dbReference type="Gene3D" id="3.90.110.10">
    <property type="entry name" value="Lactate dehydrogenase/glycoside hydrolase, family 4, C-terminal"/>
    <property type="match status" value="1"/>
</dbReference>
<dbReference type="Gene3D" id="3.40.50.720">
    <property type="entry name" value="NAD(P)-binding Rossmann-like Domain"/>
    <property type="match status" value="1"/>
</dbReference>
<dbReference type="HAMAP" id="MF_01516">
    <property type="entry name" value="Malate_dehydrog_1"/>
    <property type="match status" value="1"/>
</dbReference>
<dbReference type="InterPro" id="IPR001557">
    <property type="entry name" value="L-lactate/malate_DH"/>
</dbReference>
<dbReference type="InterPro" id="IPR022383">
    <property type="entry name" value="Lactate/malate_DH_C"/>
</dbReference>
<dbReference type="InterPro" id="IPR001236">
    <property type="entry name" value="Lactate/malate_DH_N"/>
</dbReference>
<dbReference type="InterPro" id="IPR015955">
    <property type="entry name" value="Lactate_DH/Glyco_Ohase_4_C"/>
</dbReference>
<dbReference type="InterPro" id="IPR001252">
    <property type="entry name" value="Malate_DH_AS"/>
</dbReference>
<dbReference type="InterPro" id="IPR010097">
    <property type="entry name" value="Malate_DH_type1"/>
</dbReference>
<dbReference type="InterPro" id="IPR023958">
    <property type="entry name" value="Malate_DH_type1_bac"/>
</dbReference>
<dbReference type="InterPro" id="IPR036291">
    <property type="entry name" value="NAD(P)-bd_dom_sf"/>
</dbReference>
<dbReference type="NCBIfam" id="TIGR01772">
    <property type="entry name" value="MDH_euk_gproteo"/>
    <property type="match status" value="1"/>
</dbReference>
<dbReference type="PANTHER" id="PTHR11540">
    <property type="entry name" value="MALATE AND LACTATE DEHYDROGENASE"/>
    <property type="match status" value="1"/>
</dbReference>
<dbReference type="PANTHER" id="PTHR11540:SF16">
    <property type="entry name" value="MALATE DEHYDROGENASE, MITOCHONDRIAL"/>
    <property type="match status" value="1"/>
</dbReference>
<dbReference type="Pfam" id="PF02866">
    <property type="entry name" value="Ldh_1_C"/>
    <property type="match status" value="1"/>
</dbReference>
<dbReference type="Pfam" id="PF00056">
    <property type="entry name" value="Ldh_1_N"/>
    <property type="match status" value="1"/>
</dbReference>
<dbReference type="PIRSF" id="PIRSF000102">
    <property type="entry name" value="Lac_mal_DH"/>
    <property type="match status" value="1"/>
</dbReference>
<dbReference type="SUPFAM" id="SSF56327">
    <property type="entry name" value="LDH C-terminal domain-like"/>
    <property type="match status" value="1"/>
</dbReference>
<dbReference type="SUPFAM" id="SSF51735">
    <property type="entry name" value="NAD(P)-binding Rossmann-fold domains"/>
    <property type="match status" value="1"/>
</dbReference>
<dbReference type="PROSITE" id="PS00068">
    <property type="entry name" value="MDH"/>
    <property type="match status" value="1"/>
</dbReference>
<proteinExistence type="inferred from homology"/>
<organism>
    <name type="scientific">Yersinia pseudotuberculosis serotype IB (strain PB1/+)</name>
    <dbReference type="NCBI Taxonomy" id="502801"/>
    <lineage>
        <taxon>Bacteria</taxon>
        <taxon>Pseudomonadati</taxon>
        <taxon>Pseudomonadota</taxon>
        <taxon>Gammaproteobacteria</taxon>
        <taxon>Enterobacterales</taxon>
        <taxon>Yersiniaceae</taxon>
        <taxon>Yersinia</taxon>
    </lineage>
</organism>